<feature type="chain" id="PRO_0000320037" description="Coiled-coil domain-containing protein 66">
    <location>
        <begin position="1"/>
        <end position="948"/>
    </location>
</feature>
<feature type="region of interest" description="Disordered" evidence="3">
    <location>
        <begin position="458"/>
        <end position="499"/>
    </location>
</feature>
<feature type="region of interest" description="Mediates localization to cilia, centrosomes and spindle microtubules and the interaction with PCM1, CEP290, CEP104 and CSPP1" evidence="9 10">
    <location>
        <begin position="570"/>
        <end position="948"/>
    </location>
</feature>
<feature type="region of interest" description="Disordered" evidence="3">
    <location>
        <begin position="690"/>
        <end position="713"/>
    </location>
</feature>
<feature type="region of interest" description="Disordered" evidence="3">
    <location>
        <begin position="788"/>
        <end position="808"/>
    </location>
</feature>
<feature type="coiled-coil region" evidence="2">
    <location>
        <begin position="467"/>
        <end position="558"/>
    </location>
</feature>
<feature type="modified residue" description="Phosphothreonine" evidence="15">
    <location>
        <position position="115"/>
    </location>
</feature>
<feature type="modified residue" description="Phosphothreonine" evidence="15">
    <location>
        <position position="121"/>
    </location>
</feature>
<feature type="modified residue" description="Phosphoserine" evidence="1">
    <location>
        <position position="369"/>
    </location>
</feature>
<feature type="modified residue" description="Phosphoserine" evidence="1">
    <location>
        <position position="606"/>
    </location>
</feature>
<feature type="splice variant" id="VSP_036545" description="In isoform 3 and isoform 4." evidence="11 12">
    <location>
        <begin position="1"/>
        <end position="34"/>
    </location>
</feature>
<feature type="splice variant" id="VSP_036546" description="In isoform 4." evidence="11">
    <location>
        <begin position="231"/>
        <end position="948"/>
    </location>
</feature>
<feature type="splice variant" id="VSP_031586" description="In isoform 2." evidence="11">
    <original>DEQVALKKKEKEVSEK</original>
    <variation>VLQTVQAWYQHLLGFW</variation>
    <location>
        <begin position="272"/>
        <end position="287"/>
    </location>
</feature>
<feature type="splice variant" id="VSP_031587" description="In isoform 2." evidence="11">
    <location>
        <begin position="288"/>
        <end position="948"/>
    </location>
</feature>
<feature type="sequence variant" id="VAR_039111" description="In dbSNP:rs1491170." evidence="4 6">
    <original>Q</original>
    <variation>R</variation>
    <location>
        <position position="383"/>
    </location>
</feature>
<feature type="sequence variant" id="VAR_039112" description="In dbSNP:rs7637449." evidence="4 6">
    <original>R</original>
    <variation>Q</variation>
    <location>
        <position position="460"/>
    </location>
</feature>
<feature type="sequence variant" id="VAR_039113" description="In dbSNP:rs4681904.">
    <original>E</original>
    <variation>K</variation>
    <location>
        <position position="592"/>
    </location>
</feature>
<feature type="sequence variant" id="VAR_080466" description="In dbSNP:rs4681904." evidence="6">
    <original>E</original>
    <variation>Q</variation>
    <location>
        <position position="592"/>
    </location>
</feature>
<feature type="sequence variant" id="VAR_080467" description="In dbSNP:rs758090911." evidence="6">
    <original>C</original>
    <variation>Y</variation>
    <location>
        <position position="681"/>
    </location>
</feature>
<feature type="mutagenesis site" description="Loss of association with microtubules and localization to centrosomes." evidence="7">
    <location>
        <begin position="208"/>
        <end position="948"/>
    </location>
</feature>
<feature type="sequence conflict" description="In Ref. 1; BAC04607." evidence="13" ref="1">
    <original>C</original>
    <variation>Y</variation>
    <location>
        <position position="104"/>
    </location>
</feature>
<feature type="sequence conflict" description="In Ref. 3; AAI32828." evidence="13" ref="3">
    <original>T</original>
    <variation>TS</variation>
    <location>
        <position position="605"/>
    </location>
</feature>
<gene>
    <name evidence="14" type="primary">CCDC66</name>
</gene>
<keyword id="KW-0025">Alternative splicing</keyword>
<keyword id="KW-0131">Cell cycle</keyword>
<keyword id="KW-0132">Cell division</keyword>
<keyword id="KW-0966">Cell projection</keyword>
<keyword id="KW-0969">Cilium</keyword>
<keyword id="KW-0970">Cilium biogenesis/degradation</keyword>
<keyword id="KW-0175">Coiled coil</keyword>
<keyword id="KW-0963">Cytoplasm</keyword>
<keyword id="KW-0206">Cytoskeleton</keyword>
<keyword id="KW-1015">Disulfide bond</keyword>
<keyword id="KW-0493">Microtubule</keyword>
<keyword id="KW-0597">Phosphoprotein</keyword>
<keyword id="KW-1267">Proteomics identification</keyword>
<keyword id="KW-1185">Reference proteome</keyword>
<protein>
    <recommendedName>
        <fullName evidence="13">Coiled-coil domain-containing protein 66</fullName>
    </recommendedName>
</protein>
<proteinExistence type="evidence at protein level"/>
<comment type="function">
    <text evidence="1 7 9">Microtubule-binding protein required for ciliogenesis (PubMed:28235840). May function in ciliogenesis by mediating the transport of proteins like BBS4 to the cilium, but also through the organization of the centriolar satellites (PubMed:28235840). Required for the assembly of signaling-competent cilia with proper structure and length (PubMed:36606424). Mediates this function in part by regulating transition zone assembly and basal body recruitment of the IFT-B complex (PubMed:36606424). Cooperates with the ciliopathy proteins CSPP1 and CEP104 during cilium length regulation (PubMed:36606424). Plays two important roles during cell division (PubMed:35849559). First, is required for mitotic progression via regulation of spindle assembly, organization and orientation, levels of spindle microtubules (MTs), kinetochore-fiber integrity, and chromosome alignment (PubMed:35849559). Second, functions during cytokinesis in part by regulating assembly and organization of central spindle and midbody MTs (PubMed:35849559). Plays a role in retina morphogenesis and/or homeostasis (By similarity).</text>
</comment>
<comment type="subunit">
    <text evidence="1 7 8 9 10">Homodimer; disulfide-linked (By similarity). Interacts with CEP290 (PubMed:28235840, PubMed:36606424). Interacts with PCM1 (PubMed:28235840, PubMed:36606424). Interacts with ARMC9, TOGARAM1, CSPP1 and CEP104 (PubMed:32453716, PubMed:36606424). Interacts with CDK5RAP2, CEP152, CEP192, TBG1 and PRC1 (PubMed:35849559).</text>
</comment>
<comment type="subcellular location">
    <subcellularLocation>
        <location evidence="7 9 10">Cytoplasm</location>
        <location evidence="7 9 10">Cytoskeleton</location>
        <location evidence="7 9 10">Microtubule organizing center</location>
        <location evidence="7 9 10">Centrosome</location>
    </subcellularLocation>
    <subcellularLocation>
        <location evidence="7 9 10">Cytoplasm</location>
        <location evidence="7 9 10">Cytoskeleton</location>
        <location evidence="7 9 10">Microtubule organizing center</location>
        <location evidence="7 9 10">Centrosome</location>
        <location evidence="7 9 10">Centriolar satellite</location>
    </subcellularLocation>
    <subcellularLocation>
        <location evidence="7 10">Cell projection</location>
        <location evidence="7 10">Cilium</location>
    </subcellularLocation>
    <subcellularLocation>
        <location evidence="7 10">Cytoplasm</location>
        <location evidence="7 10">Cytoskeleton</location>
        <location evidence="7 10">Cilium basal body</location>
    </subcellularLocation>
    <subcellularLocation>
        <location evidence="10">Cytoplasm</location>
        <location evidence="10">Cytoskeleton</location>
        <location evidence="10">Cilium axoneme</location>
    </subcellularLocation>
    <subcellularLocation>
        <location evidence="5">Photoreceptor inner segment</location>
    </subcellularLocation>
    <subcellularLocation>
        <location evidence="5">Cell projection</location>
        <location evidence="5">Cilium</location>
        <location evidence="5">Photoreceptor outer segment</location>
    </subcellularLocation>
    <subcellularLocation>
        <location evidence="9">Cytoplasm</location>
        <location evidence="9">Cytoskeleton</location>
        <location evidence="9">Spindle</location>
    </subcellularLocation>
    <subcellularLocation>
        <location evidence="9">Midbody</location>
    </subcellularLocation>
    <text evidence="5 7">Restricted to the centrosomes and the spindle microtubules during mitosis (PubMed:28235840). Enriched in the inner segment of the photoreceptor (PubMed:19777273).</text>
</comment>
<comment type="alternative products">
    <event type="alternative splicing"/>
    <isoform>
        <id>A2RUB6-1</id>
        <name>1</name>
        <sequence type="displayed"/>
    </isoform>
    <isoform>
        <id>A2RUB6-2</id>
        <name>2</name>
        <sequence type="described" ref="VSP_031586 VSP_031587"/>
    </isoform>
    <isoform>
        <id>A2RUB6-3</id>
        <name>3</name>
        <sequence type="described" ref="VSP_036545"/>
    </isoform>
    <isoform>
        <id>A2RUB6-4</id>
        <name>4</name>
        <sequence type="described" ref="VSP_036545 VSP_036546"/>
    </isoform>
</comment>
<comment type="tissue specificity">
    <text evidence="5 7">Widely expressed (at protein level) (PubMed:28235840). Expressed in retina, mainly in photoreceptors but also in outer plexiform and ganglion cell layers (at protein level) (PubMed:19777273).</text>
</comment>
<comment type="sequence caution" evidence="13">
    <conflict type="erroneous initiation">
        <sequence resource="EMBL-CDS" id="AAH47509"/>
    </conflict>
    <text>Truncated N-terminus.</text>
</comment>
<comment type="sequence caution" evidence="13">
    <conflict type="erroneous initiation">
        <sequence resource="EMBL-CDS" id="AAI32828"/>
    </conflict>
    <text>Truncated N-terminus.</text>
</comment>
<comment type="sequence caution" evidence="13">
    <conflict type="frameshift">
        <sequence resource="EMBL-CDS" id="BAC04607"/>
    </conflict>
</comment>
<organism>
    <name type="scientific">Homo sapiens</name>
    <name type="common">Human</name>
    <dbReference type="NCBI Taxonomy" id="9606"/>
    <lineage>
        <taxon>Eukaryota</taxon>
        <taxon>Metazoa</taxon>
        <taxon>Chordata</taxon>
        <taxon>Craniata</taxon>
        <taxon>Vertebrata</taxon>
        <taxon>Euteleostomi</taxon>
        <taxon>Mammalia</taxon>
        <taxon>Eutheria</taxon>
        <taxon>Euarchontoglires</taxon>
        <taxon>Primates</taxon>
        <taxon>Haplorrhini</taxon>
        <taxon>Catarrhini</taxon>
        <taxon>Hominidae</taxon>
        <taxon>Homo</taxon>
    </lineage>
</organism>
<dbReference type="EMBL" id="AK095688">
    <property type="protein sequence ID" value="BAC04607.1"/>
    <property type="status" value="ALT_FRAME"/>
    <property type="molecule type" value="mRNA"/>
</dbReference>
<dbReference type="EMBL" id="AK125303">
    <property type="protein sequence ID" value="BAG54180.1"/>
    <property type="molecule type" value="mRNA"/>
</dbReference>
<dbReference type="EMBL" id="AC098478">
    <property type="status" value="NOT_ANNOTATED_CDS"/>
    <property type="molecule type" value="Genomic_DNA"/>
</dbReference>
<dbReference type="EMBL" id="AC099781">
    <property type="status" value="NOT_ANNOTATED_CDS"/>
    <property type="molecule type" value="Genomic_DNA"/>
</dbReference>
<dbReference type="EMBL" id="BC047509">
    <property type="protein sequence ID" value="AAH47509.1"/>
    <property type="status" value="ALT_INIT"/>
    <property type="molecule type" value="mRNA"/>
</dbReference>
<dbReference type="EMBL" id="BC132827">
    <property type="protein sequence ID" value="AAI32828.2"/>
    <property type="status" value="ALT_INIT"/>
    <property type="molecule type" value="mRNA"/>
</dbReference>
<dbReference type="CCDS" id="CCDS33770.2">
    <molecule id="A2RUB6-3"/>
</dbReference>
<dbReference type="CCDS" id="CCDS46852.1">
    <molecule id="A2RUB6-1"/>
</dbReference>
<dbReference type="RefSeq" id="NP_001012524.4">
    <molecule id="A2RUB6-3"/>
    <property type="nucleotide sequence ID" value="NM_001012506.5"/>
</dbReference>
<dbReference type="RefSeq" id="NP_001135419.1">
    <molecule id="A2RUB6-1"/>
    <property type="nucleotide sequence ID" value="NM_001141947.3"/>
</dbReference>
<dbReference type="RefSeq" id="NP_001340081.1">
    <molecule id="A2RUB6-3"/>
    <property type="nucleotide sequence ID" value="NM_001353152.1"/>
</dbReference>
<dbReference type="RefSeq" id="NP_001340082.1">
    <molecule id="A2RUB6-3"/>
    <property type="nucleotide sequence ID" value="NM_001353153.1"/>
</dbReference>
<dbReference type="RefSeq" id="XP_016861723.1">
    <property type="nucleotide sequence ID" value="XM_017006234.1"/>
</dbReference>
<dbReference type="RefSeq" id="XP_016861724.1">
    <property type="nucleotide sequence ID" value="XM_017006235.1"/>
</dbReference>
<dbReference type="SMR" id="A2RUB6"/>
<dbReference type="BioGRID" id="130082">
    <property type="interactions" value="33"/>
</dbReference>
<dbReference type="FunCoup" id="A2RUB6">
    <property type="interactions" value="966"/>
</dbReference>
<dbReference type="IntAct" id="A2RUB6">
    <property type="interactions" value="21"/>
</dbReference>
<dbReference type="MINT" id="A2RUB6"/>
<dbReference type="STRING" id="9606.ENSP00000378167"/>
<dbReference type="GlyGen" id="A2RUB6">
    <property type="glycosylation" value="1 site, 1 O-linked glycan (1 site)"/>
</dbReference>
<dbReference type="iPTMnet" id="A2RUB6"/>
<dbReference type="PhosphoSitePlus" id="A2RUB6"/>
<dbReference type="BioMuta" id="CCDC66"/>
<dbReference type="jPOST" id="A2RUB6"/>
<dbReference type="MassIVE" id="A2RUB6"/>
<dbReference type="PaxDb" id="9606-ENSP00000378167"/>
<dbReference type="PeptideAtlas" id="A2RUB6"/>
<dbReference type="ProteomicsDB" id="507">
    <molecule id="A2RUB6-1"/>
</dbReference>
<dbReference type="ProteomicsDB" id="508">
    <molecule id="A2RUB6-2"/>
</dbReference>
<dbReference type="ProteomicsDB" id="509">
    <molecule id="A2RUB6-3"/>
</dbReference>
<dbReference type="ProteomicsDB" id="510">
    <molecule id="A2RUB6-4"/>
</dbReference>
<dbReference type="TopDownProteomics" id="A2RUB6-4">
    <molecule id="A2RUB6-4"/>
</dbReference>
<dbReference type="Antibodypedia" id="31476">
    <property type="antibodies" value="107 antibodies from 17 providers"/>
</dbReference>
<dbReference type="DNASU" id="285331"/>
<dbReference type="Ensembl" id="ENST00000326595.11">
    <molecule id="A2RUB6-3"/>
    <property type="protein sequence ID" value="ENSP00000326050.7"/>
    <property type="gene ID" value="ENSG00000180376.17"/>
</dbReference>
<dbReference type="Ensembl" id="ENST00000394672.8">
    <molecule id="A2RUB6-1"/>
    <property type="protein sequence ID" value="ENSP00000378167.3"/>
    <property type="gene ID" value="ENSG00000180376.17"/>
</dbReference>
<dbReference type="GeneID" id="285331"/>
<dbReference type="KEGG" id="hsa:285331"/>
<dbReference type="MANE-Select" id="ENST00000394672.8">
    <property type="protein sequence ID" value="ENSP00000378167.3"/>
    <property type="RefSeq nucleotide sequence ID" value="NM_001141947.3"/>
    <property type="RefSeq protein sequence ID" value="NP_001135419.1"/>
</dbReference>
<dbReference type="UCSC" id="uc003dhu.4">
    <molecule id="A2RUB6-1"/>
    <property type="organism name" value="human"/>
</dbReference>
<dbReference type="AGR" id="HGNC:27709"/>
<dbReference type="CTD" id="285331"/>
<dbReference type="DisGeNET" id="285331"/>
<dbReference type="GeneCards" id="CCDC66"/>
<dbReference type="HGNC" id="HGNC:27709">
    <property type="gene designation" value="CCDC66"/>
</dbReference>
<dbReference type="HPA" id="ENSG00000180376">
    <property type="expression patterns" value="Low tissue specificity"/>
</dbReference>
<dbReference type="MIM" id="619287">
    <property type="type" value="gene"/>
</dbReference>
<dbReference type="neXtProt" id="NX_A2RUB6"/>
<dbReference type="OpenTargets" id="ENSG00000180376"/>
<dbReference type="PharmGKB" id="PA143485418"/>
<dbReference type="VEuPathDB" id="HostDB:ENSG00000180376"/>
<dbReference type="eggNOG" id="ENOG502R1PQ">
    <property type="taxonomic scope" value="Eukaryota"/>
</dbReference>
<dbReference type="GeneTree" id="ENSGT00390000012411"/>
<dbReference type="HOGENOM" id="CLU_016964_0_0_1"/>
<dbReference type="InParanoid" id="A2RUB6"/>
<dbReference type="OMA" id="MKSNLVC"/>
<dbReference type="OrthoDB" id="10042846at2759"/>
<dbReference type="PAN-GO" id="A2RUB6">
    <property type="GO annotations" value="5 GO annotations based on evolutionary models"/>
</dbReference>
<dbReference type="PhylomeDB" id="A2RUB6"/>
<dbReference type="TreeFam" id="TF350489"/>
<dbReference type="PathwayCommons" id="A2RUB6"/>
<dbReference type="SignaLink" id="A2RUB6"/>
<dbReference type="BioGRID-ORCS" id="285331">
    <property type="hits" value="16 hits in 1159 CRISPR screens"/>
</dbReference>
<dbReference type="ChiTaRS" id="CCDC66">
    <property type="organism name" value="human"/>
</dbReference>
<dbReference type="GenomeRNAi" id="285331"/>
<dbReference type="Pharos" id="A2RUB6">
    <property type="development level" value="Tbio"/>
</dbReference>
<dbReference type="PRO" id="PR:A2RUB6"/>
<dbReference type="Proteomes" id="UP000005640">
    <property type="component" value="Chromosome 3"/>
</dbReference>
<dbReference type="RNAct" id="A2RUB6">
    <property type="molecule type" value="protein"/>
</dbReference>
<dbReference type="Bgee" id="ENSG00000180376">
    <property type="expression patterns" value="Expressed in calcaneal tendon and 153 other cell types or tissues"/>
</dbReference>
<dbReference type="ExpressionAtlas" id="A2RUB6">
    <property type="expression patterns" value="baseline and differential"/>
</dbReference>
<dbReference type="GO" id="GO:0005930">
    <property type="term" value="C:axoneme"/>
    <property type="evidence" value="ECO:0000314"/>
    <property type="project" value="UniProtKB"/>
</dbReference>
<dbReference type="GO" id="GO:0030054">
    <property type="term" value="C:cell junction"/>
    <property type="evidence" value="ECO:0000314"/>
    <property type="project" value="HPA"/>
</dbReference>
<dbReference type="GO" id="GO:0034451">
    <property type="term" value="C:centriolar satellite"/>
    <property type="evidence" value="ECO:0000314"/>
    <property type="project" value="HPA"/>
</dbReference>
<dbReference type="GO" id="GO:0005813">
    <property type="term" value="C:centrosome"/>
    <property type="evidence" value="ECO:0000314"/>
    <property type="project" value="UniProtKB"/>
</dbReference>
<dbReference type="GO" id="GO:0036064">
    <property type="term" value="C:ciliary basal body"/>
    <property type="evidence" value="ECO:0000314"/>
    <property type="project" value="UniProtKB"/>
</dbReference>
<dbReference type="GO" id="GO:0005929">
    <property type="term" value="C:cilium"/>
    <property type="evidence" value="ECO:0000314"/>
    <property type="project" value="HPA"/>
</dbReference>
<dbReference type="GO" id="GO:0005829">
    <property type="term" value="C:cytosol"/>
    <property type="evidence" value="ECO:0000314"/>
    <property type="project" value="HPA"/>
</dbReference>
<dbReference type="GO" id="GO:0090543">
    <property type="term" value="C:Flemming body"/>
    <property type="evidence" value="ECO:0000314"/>
    <property type="project" value="HPA"/>
</dbReference>
<dbReference type="GO" id="GO:0043231">
    <property type="term" value="C:intracellular membrane-bounded organelle"/>
    <property type="evidence" value="ECO:0000314"/>
    <property type="project" value="HPA"/>
</dbReference>
<dbReference type="GO" id="GO:0005874">
    <property type="term" value="C:microtubule"/>
    <property type="evidence" value="ECO:0000314"/>
    <property type="project" value="UniProtKB"/>
</dbReference>
<dbReference type="GO" id="GO:0030496">
    <property type="term" value="C:midbody"/>
    <property type="evidence" value="ECO:0000314"/>
    <property type="project" value="UniProtKB"/>
</dbReference>
<dbReference type="GO" id="GO:0001917">
    <property type="term" value="C:photoreceptor inner segment"/>
    <property type="evidence" value="ECO:0000314"/>
    <property type="project" value="UniProtKB"/>
</dbReference>
<dbReference type="GO" id="GO:0001750">
    <property type="term" value="C:photoreceptor outer segment"/>
    <property type="evidence" value="ECO:0007669"/>
    <property type="project" value="UniProtKB-SubCell"/>
</dbReference>
<dbReference type="GO" id="GO:0005886">
    <property type="term" value="C:plasma membrane"/>
    <property type="evidence" value="ECO:0000314"/>
    <property type="project" value="HPA"/>
</dbReference>
<dbReference type="GO" id="GO:0005819">
    <property type="term" value="C:spindle"/>
    <property type="evidence" value="ECO:0000314"/>
    <property type="project" value="UniProtKB"/>
</dbReference>
<dbReference type="GO" id="GO:0008017">
    <property type="term" value="F:microtubule binding"/>
    <property type="evidence" value="ECO:0000314"/>
    <property type="project" value="UniProtKB"/>
</dbReference>
<dbReference type="GO" id="GO:0042803">
    <property type="term" value="F:protein homodimerization activity"/>
    <property type="evidence" value="ECO:0000250"/>
    <property type="project" value="UniProtKB"/>
</dbReference>
<dbReference type="GO" id="GO:0051301">
    <property type="term" value="P:cell division"/>
    <property type="evidence" value="ECO:0007669"/>
    <property type="project" value="UniProtKB-KW"/>
</dbReference>
<dbReference type="GO" id="GO:1905349">
    <property type="term" value="P:ciliary transition zone assembly"/>
    <property type="evidence" value="ECO:0000315"/>
    <property type="project" value="UniProtKB"/>
</dbReference>
<dbReference type="GO" id="GO:0060271">
    <property type="term" value="P:cilium assembly"/>
    <property type="evidence" value="ECO:0000315"/>
    <property type="project" value="UniProtKB"/>
</dbReference>
<dbReference type="GO" id="GO:0050908">
    <property type="term" value="P:detection of light stimulus involved in visual perception"/>
    <property type="evidence" value="ECO:0007669"/>
    <property type="project" value="Ensembl"/>
</dbReference>
<dbReference type="GO" id="GO:0000132">
    <property type="term" value="P:establishment of mitotic spindle orientation"/>
    <property type="evidence" value="ECO:0000315"/>
    <property type="project" value="UniProtKB"/>
</dbReference>
<dbReference type="GO" id="GO:0001578">
    <property type="term" value="P:microtubule bundle formation"/>
    <property type="evidence" value="ECO:0000314"/>
    <property type="project" value="UniProtKB"/>
</dbReference>
<dbReference type="GO" id="GO:1902850">
    <property type="term" value="P:microtubule cytoskeleton organization involved in mitosis"/>
    <property type="evidence" value="ECO:0000315"/>
    <property type="project" value="UniProtKB"/>
</dbReference>
<dbReference type="GO" id="GO:0007020">
    <property type="term" value="P:microtubule nucleation"/>
    <property type="evidence" value="ECO:0000315"/>
    <property type="project" value="UniProtKB"/>
</dbReference>
<dbReference type="GO" id="GO:0007080">
    <property type="term" value="P:mitotic metaphase chromosome alignment"/>
    <property type="evidence" value="ECO:0000315"/>
    <property type="project" value="UniProtKB"/>
</dbReference>
<dbReference type="GO" id="GO:0090307">
    <property type="term" value="P:mitotic spindle assembly"/>
    <property type="evidence" value="ECO:0000315"/>
    <property type="project" value="UniProtKB"/>
</dbReference>
<dbReference type="GO" id="GO:0007052">
    <property type="term" value="P:mitotic spindle organization"/>
    <property type="evidence" value="ECO:0000315"/>
    <property type="project" value="UniProtKB"/>
</dbReference>
<dbReference type="GO" id="GO:0032465">
    <property type="term" value="P:regulation of cytokinesis"/>
    <property type="evidence" value="ECO:0000315"/>
    <property type="project" value="UniProtKB"/>
</dbReference>
<dbReference type="GO" id="GO:1903564">
    <property type="term" value="P:regulation of protein localization to cilium"/>
    <property type="evidence" value="ECO:0000315"/>
    <property type="project" value="UniProtKB"/>
</dbReference>
<dbReference type="GO" id="GO:0001895">
    <property type="term" value="P:retina homeostasis"/>
    <property type="evidence" value="ECO:0000250"/>
    <property type="project" value="UniProtKB"/>
</dbReference>
<dbReference type="InterPro" id="IPR039183">
    <property type="entry name" value="CCD66"/>
</dbReference>
<dbReference type="InterPro" id="IPR040467">
    <property type="entry name" value="CCDC66_dom"/>
</dbReference>
<dbReference type="PANTHER" id="PTHR22736">
    <property type="entry name" value="COILED-COIL DOMAIN-CONTAINING PROTEIN 66"/>
    <property type="match status" value="1"/>
</dbReference>
<dbReference type="PANTHER" id="PTHR22736:SF2">
    <property type="entry name" value="COILED-COIL DOMAIN-CONTAINING PROTEIN 66"/>
    <property type="match status" value="1"/>
</dbReference>
<dbReference type="Pfam" id="PF15236">
    <property type="entry name" value="CCDC66"/>
    <property type="match status" value="1"/>
</dbReference>
<name>CCD66_HUMAN</name>
<accession>A2RUB6</accession>
<accession>B3KWL8</accession>
<accession>Q4VC34</accession>
<accession>Q8N949</accession>
<reference key="1">
    <citation type="journal article" date="2004" name="Nat. Genet.">
        <title>Complete sequencing and characterization of 21,243 full-length human cDNAs.</title>
        <authorList>
            <person name="Ota T."/>
            <person name="Suzuki Y."/>
            <person name="Nishikawa T."/>
            <person name="Otsuki T."/>
            <person name="Sugiyama T."/>
            <person name="Irie R."/>
            <person name="Wakamatsu A."/>
            <person name="Hayashi K."/>
            <person name="Sato H."/>
            <person name="Nagai K."/>
            <person name="Kimura K."/>
            <person name="Makita H."/>
            <person name="Sekine M."/>
            <person name="Obayashi M."/>
            <person name="Nishi T."/>
            <person name="Shibahara T."/>
            <person name="Tanaka T."/>
            <person name="Ishii S."/>
            <person name="Yamamoto J."/>
            <person name="Saito K."/>
            <person name="Kawai Y."/>
            <person name="Isono Y."/>
            <person name="Nakamura Y."/>
            <person name="Nagahari K."/>
            <person name="Murakami K."/>
            <person name="Yasuda T."/>
            <person name="Iwayanagi T."/>
            <person name="Wagatsuma M."/>
            <person name="Shiratori A."/>
            <person name="Sudo H."/>
            <person name="Hosoiri T."/>
            <person name="Kaku Y."/>
            <person name="Kodaira H."/>
            <person name="Kondo H."/>
            <person name="Sugawara M."/>
            <person name="Takahashi M."/>
            <person name="Kanda K."/>
            <person name="Yokoi T."/>
            <person name="Furuya T."/>
            <person name="Kikkawa E."/>
            <person name="Omura Y."/>
            <person name="Abe K."/>
            <person name="Kamihara K."/>
            <person name="Katsuta N."/>
            <person name="Sato K."/>
            <person name="Tanikawa M."/>
            <person name="Yamazaki M."/>
            <person name="Ninomiya K."/>
            <person name="Ishibashi T."/>
            <person name="Yamashita H."/>
            <person name="Murakawa K."/>
            <person name="Fujimori K."/>
            <person name="Tanai H."/>
            <person name="Kimata M."/>
            <person name="Watanabe M."/>
            <person name="Hiraoka S."/>
            <person name="Chiba Y."/>
            <person name="Ishida S."/>
            <person name="Ono Y."/>
            <person name="Takiguchi S."/>
            <person name="Watanabe S."/>
            <person name="Yosida M."/>
            <person name="Hotuta T."/>
            <person name="Kusano J."/>
            <person name="Kanehori K."/>
            <person name="Takahashi-Fujii A."/>
            <person name="Hara H."/>
            <person name="Tanase T.-O."/>
            <person name="Nomura Y."/>
            <person name="Togiya S."/>
            <person name="Komai F."/>
            <person name="Hara R."/>
            <person name="Takeuchi K."/>
            <person name="Arita M."/>
            <person name="Imose N."/>
            <person name="Musashino K."/>
            <person name="Yuuki H."/>
            <person name="Oshima A."/>
            <person name="Sasaki N."/>
            <person name="Aotsuka S."/>
            <person name="Yoshikawa Y."/>
            <person name="Matsunawa H."/>
            <person name="Ichihara T."/>
            <person name="Shiohata N."/>
            <person name="Sano S."/>
            <person name="Moriya S."/>
            <person name="Momiyama H."/>
            <person name="Satoh N."/>
            <person name="Takami S."/>
            <person name="Terashima Y."/>
            <person name="Suzuki O."/>
            <person name="Nakagawa S."/>
            <person name="Senoh A."/>
            <person name="Mizoguchi H."/>
            <person name="Goto Y."/>
            <person name="Shimizu F."/>
            <person name="Wakebe H."/>
            <person name="Hishigaki H."/>
            <person name="Watanabe T."/>
            <person name="Sugiyama A."/>
            <person name="Takemoto M."/>
            <person name="Kawakami B."/>
            <person name="Yamazaki M."/>
            <person name="Watanabe K."/>
            <person name="Kumagai A."/>
            <person name="Itakura S."/>
            <person name="Fukuzumi Y."/>
            <person name="Fujimori Y."/>
            <person name="Komiyama M."/>
            <person name="Tashiro H."/>
            <person name="Tanigami A."/>
            <person name="Fujiwara T."/>
            <person name="Ono T."/>
            <person name="Yamada K."/>
            <person name="Fujii Y."/>
            <person name="Ozaki K."/>
            <person name="Hirao M."/>
            <person name="Ohmori Y."/>
            <person name="Kawabata A."/>
            <person name="Hikiji T."/>
            <person name="Kobatake N."/>
            <person name="Inagaki H."/>
            <person name="Ikema Y."/>
            <person name="Okamoto S."/>
            <person name="Okitani R."/>
            <person name="Kawakami T."/>
            <person name="Noguchi S."/>
            <person name="Itoh T."/>
            <person name="Shigeta K."/>
            <person name="Senba T."/>
            <person name="Matsumura K."/>
            <person name="Nakajima Y."/>
            <person name="Mizuno T."/>
            <person name="Morinaga M."/>
            <person name="Sasaki M."/>
            <person name="Togashi T."/>
            <person name="Oyama M."/>
            <person name="Hata H."/>
            <person name="Watanabe M."/>
            <person name="Komatsu T."/>
            <person name="Mizushima-Sugano J."/>
            <person name="Satoh T."/>
            <person name="Shirai Y."/>
            <person name="Takahashi Y."/>
            <person name="Nakagawa K."/>
            <person name="Okumura K."/>
            <person name="Nagase T."/>
            <person name="Nomura N."/>
            <person name="Kikuchi H."/>
            <person name="Masuho Y."/>
            <person name="Yamashita R."/>
            <person name="Nakai K."/>
            <person name="Yada T."/>
            <person name="Nakamura Y."/>
            <person name="Ohara O."/>
            <person name="Isogai T."/>
            <person name="Sugano S."/>
        </authorList>
    </citation>
    <scope>NUCLEOTIDE SEQUENCE [LARGE SCALE MRNA] (ISOFORMS 2 AND 4)</scope>
    <source>
        <tissue>Brain</tissue>
        <tissue>Teratocarcinoma</tissue>
    </source>
</reference>
<reference key="2">
    <citation type="journal article" date="2006" name="Nature">
        <title>The DNA sequence, annotation and analysis of human chromosome 3.</title>
        <authorList>
            <person name="Muzny D.M."/>
            <person name="Scherer S.E."/>
            <person name="Kaul R."/>
            <person name="Wang J."/>
            <person name="Yu J."/>
            <person name="Sudbrak R."/>
            <person name="Buhay C.J."/>
            <person name="Chen R."/>
            <person name="Cree A."/>
            <person name="Ding Y."/>
            <person name="Dugan-Rocha S."/>
            <person name="Gill R."/>
            <person name="Gunaratne P."/>
            <person name="Harris R.A."/>
            <person name="Hawes A.C."/>
            <person name="Hernandez J."/>
            <person name="Hodgson A.V."/>
            <person name="Hume J."/>
            <person name="Jackson A."/>
            <person name="Khan Z.M."/>
            <person name="Kovar-Smith C."/>
            <person name="Lewis L.R."/>
            <person name="Lozado R.J."/>
            <person name="Metzker M.L."/>
            <person name="Milosavljevic A."/>
            <person name="Miner G.R."/>
            <person name="Morgan M.B."/>
            <person name="Nazareth L.V."/>
            <person name="Scott G."/>
            <person name="Sodergren E."/>
            <person name="Song X.-Z."/>
            <person name="Steffen D."/>
            <person name="Wei S."/>
            <person name="Wheeler D.A."/>
            <person name="Wright M.W."/>
            <person name="Worley K.C."/>
            <person name="Yuan Y."/>
            <person name="Zhang Z."/>
            <person name="Adams C.Q."/>
            <person name="Ansari-Lari M.A."/>
            <person name="Ayele M."/>
            <person name="Brown M.J."/>
            <person name="Chen G."/>
            <person name="Chen Z."/>
            <person name="Clendenning J."/>
            <person name="Clerc-Blankenburg K.P."/>
            <person name="Chen R."/>
            <person name="Chen Z."/>
            <person name="Davis C."/>
            <person name="Delgado O."/>
            <person name="Dinh H.H."/>
            <person name="Dong W."/>
            <person name="Draper H."/>
            <person name="Ernst S."/>
            <person name="Fu G."/>
            <person name="Gonzalez-Garay M.L."/>
            <person name="Garcia D.K."/>
            <person name="Gillett W."/>
            <person name="Gu J."/>
            <person name="Hao B."/>
            <person name="Haugen E."/>
            <person name="Havlak P."/>
            <person name="He X."/>
            <person name="Hennig S."/>
            <person name="Hu S."/>
            <person name="Huang W."/>
            <person name="Jackson L.R."/>
            <person name="Jacob L.S."/>
            <person name="Kelly S.H."/>
            <person name="Kube M."/>
            <person name="Levy R."/>
            <person name="Li Z."/>
            <person name="Liu B."/>
            <person name="Liu J."/>
            <person name="Liu W."/>
            <person name="Lu J."/>
            <person name="Maheshwari M."/>
            <person name="Nguyen B.-V."/>
            <person name="Okwuonu G.O."/>
            <person name="Palmeiri A."/>
            <person name="Pasternak S."/>
            <person name="Perez L.M."/>
            <person name="Phelps K.A."/>
            <person name="Plopper F.J."/>
            <person name="Qiang B."/>
            <person name="Raymond C."/>
            <person name="Rodriguez R."/>
            <person name="Saenphimmachak C."/>
            <person name="Santibanez J."/>
            <person name="Shen H."/>
            <person name="Shen Y."/>
            <person name="Subramanian S."/>
            <person name="Tabor P.E."/>
            <person name="Verduzco D."/>
            <person name="Waldron L."/>
            <person name="Wang J."/>
            <person name="Wang J."/>
            <person name="Wang Q."/>
            <person name="Williams G.A."/>
            <person name="Wong G.K.-S."/>
            <person name="Yao Z."/>
            <person name="Zhang J."/>
            <person name="Zhang X."/>
            <person name="Zhao G."/>
            <person name="Zhou J."/>
            <person name="Zhou Y."/>
            <person name="Nelson D."/>
            <person name="Lehrach H."/>
            <person name="Reinhardt R."/>
            <person name="Naylor S.L."/>
            <person name="Yang H."/>
            <person name="Olson M."/>
            <person name="Weinstock G."/>
            <person name="Gibbs R.A."/>
        </authorList>
    </citation>
    <scope>NUCLEOTIDE SEQUENCE [LARGE SCALE GENOMIC DNA]</scope>
</reference>
<reference key="3">
    <citation type="journal article" date="2004" name="Genome Res.">
        <title>The status, quality, and expansion of the NIH full-length cDNA project: the Mammalian Gene Collection (MGC).</title>
        <authorList>
            <consortium name="The MGC Project Team"/>
        </authorList>
    </citation>
    <scope>NUCLEOTIDE SEQUENCE [LARGE SCALE MRNA] (ISOFORMS 1 AND 3)</scope>
    <scope>VARIANTS ARG-383 AND GLN-460</scope>
    <source>
        <tissue>Brain</tissue>
    </source>
</reference>
<reference key="4">
    <citation type="journal article" date="2008" name="Proc. Natl. Acad. Sci. U.S.A.">
        <title>A quantitative atlas of mitotic phosphorylation.</title>
        <authorList>
            <person name="Dephoure N."/>
            <person name="Zhou C."/>
            <person name="Villen J."/>
            <person name="Beausoleil S.A."/>
            <person name="Bakalarski C.E."/>
            <person name="Elledge S.J."/>
            <person name="Gygi S.P."/>
        </authorList>
    </citation>
    <scope>PHOSPHORYLATION [LARGE SCALE ANALYSIS] AT THR-115 AND THR-121</scope>
    <scope>IDENTIFICATION BY MASS SPECTROMETRY [LARGE SCALE ANALYSIS]</scope>
    <source>
        <tissue>Cervix carcinoma</tissue>
    </source>
</reference>
<reference key="5">
    <citation type="journal article" date="2010" name="Neurogenetics">
        <title>Progressive retinal atrophy in Schapendoes dogs: mutation of the newly identified CCDC66 gene.</title>
        <authorList>
            <person name="Dekomien G."/>
            <person name="Vollrath C."/>
            <person name="Petrasch-Parwez E."/>
            <person name="Boeve M.H."/>
            <person name="Akkad D.A."/>
            <person name="Gerding W.M."/>
            <person name="Epplen J.T."/>
        </authorList>
    </citation>
    <scope>SUBCELLULAR LOCATION</scope>
    <scope>TISSUE SPECIFICITY</scope>
</reference>
<reference key="6">
    <citation type="journal article" date="2017" name="J. Cell Sci.">
        <title>The centriolar satellite protein CCDC66 interacts with CEP290 and functions in cilium formation and trafficking.</title>
        <authorList>
            <person name="Conkar D."/>
            <person name="Culfa E."/>
            <person name="Odabasi E."/>
            <person name="Rauniyar N."/>
            <person name="Yates J.R. III"/>
            <person name="Firat-Karalar E.N."/>
        </authorList>
    </citation>
    <scope>FUNCTION</scope>
    <scope>INTERACTION WITH CEP290 AND PCM1</scope>
    <scope>SUBCELLULAR LOCATION</scope>
    <scope>TISSUE SPECIFICITY</scope>
    <scope>MUTAGENESIS OF 208-GLU--PHE-948</scope>
</reference>
<reference key="7">
    <citation type="journal article" date="2020" name="J. Clin. Invest.">
        <title>Dysfunction of the ciliary ARMC9/TOGARAM1 protein module causes Joubert syndrome.</title>
        <authorList>
            <consortium name="University of Washington Center for Mendelian Genomics"/>
            <consortium name="Genomics England Research Consortium"/>
            <person name="Latour B.L."/>
            <person name="Van De Weghe J.C."/>
            <person name="Rusterholz T.D."/>
            <person name="Letteboer S.J."/>
            <person name="Gomez A."/>
            <person name="Shaheen R."/>
            <person name="Gesemann M."/>
            <person name="Karamzade A."/>
            <person name="Asadollahi M."/>
            <person name="Barroso-Gil M."/>
            <person name="Chitre M."/>
            <person name="Grout M.E."/>
            <person name="van Reeuwijk J."/>
            <person name="van Beersum S.E."/>
            <person name="Miller C.V."/>
            <person name="Dempsey J.C."/>
            <person name="Morsy H."/>
            <person name="Bamshad M.J."/>
            <person name="Nickerson D.A."/>
            <person name="Neuhauss S.C."/>
            <person name="Boldt K."/>
            <person name="Ueffing M."/>
            <person name="Keramatipour M."/>
            <person name="Sayer J.A."/>
            <person name="Alkuraya F.S."/>
            <person name="Bachmann-Gagescu R."/>
            <person name="Roepman R."/>
            <person name="Doherty D."/>
        </authorList>
    </citation>
    <scope>INTERACTION WITH ARMC9; TOGARAM1; CSPP1 AND CEP104</scope>
</reference>
<reference key="8">
    <citation type="journal article" date="2022" name="PLoS Biol.">
        <title>The ciliopathy protein CCDC66 controls mitotic progression and cytokinesis by promoting microtubule nucleation and organization.</title>
        <authorList>
            <person name="Batman U."/>
            <person name="Deretic J."/>
            <person name="Firat-Karalar E.N."/>
        </authorList>
    </citation>
    <scope>FUNCTION</scope>
    <scope>SUBCELLULAR LOCATION</scope>
    <scope>REGION</scope>
    <scope>INTERACTION WITH CDK5RAP2; CEP152; CEP192; TBG1 AND PRC1</scope>
</reference>
<reference key="9">
    <citation type="journal article" date="2023" name="J. Cell Sci.">
        <title>CCDC66 regulates primary cilium length and signaling via interactions with transition zone and axonemal proteins.</title>
        <authorList>
            <person name="Odabasi E."/>
            <person name="Conkar D."/>
            <person name="Deretic J."/>
            <person name="Batman U."/>
            <person name="Frikstad K.M."/>
            <person name="Patzke S."/>
            <person name="Firat-Karalar E.N."/>
        </authorList>
    </citation>
    <scope>FUNCTION</scope>
    <scope>SUBCELLULAR LOCATION</scope>
    <scope>INTERACTION WITH CSPP1; PCM1; CEP104 AND CEP290</scope>
</reference>
<reference key="10">
    <citation type="journal article" date="2011" name="Hum. Mol. Genet.">
        <title>Ccdc66 null mutation causes retinal degeneration and dysfunction.</title>
        <authorList>
            <person name="Gerding W.M."/>
            <person name="Schreiber S."/>
            <person name="Schulte-Middelmann T."/>
            <person name="de Castro Marques A."/>
            <person name="Atorf J."/>
            <person name="Akkad D.A."/>
            <person name="Dekomien G."/>
            <person name="Kremers J."/>
            <person name="Dermietzel R."/>
            <person name="Gal A."/>
            <person name="Ruelicke T."/>
            <person name="Ibrahim S."/>
            <person name="Epplen J.T."/>
            <person name="Petrasch-Parwez E."/>
        </authorList>
    </citation>
    <scope>VARIANTS ARG-383; GLN-460; GLN-592 AND TYR-681</scope>
</reference>
<evidence type="ECO:0000250" key="1">
    <source>
        <dbReference type="UniProtKB" id="Q6NS45"/>
    </source>
</evidence>
<evidence type="ECO:0000255" key="2"/>
<evidence type="ECO:0000256" key="3">
    <source>
        <dbReference type="SAM" id="MobiDB-lite"/>
    </source>
</evidence>
<evidence type="ECO:0000269" key="4">
    <source>
    </source>
</evidence>
<evidence type="ECO:0000269" key="5">
    <source>
    </source>
</evidence>
<evidence type="ECO:0000269" key="6">
    <source>
    </source>
</evidence>
<evidence type="ECO:0000269" key="7">
    <source>
    </source>
</evidence>
<evidence type="ECO:0000269" key="8">
    <source>
    </source>
</evidence>
<evidence type="ECO:0000269" key="9">
    <source>
    </source>
</evidence>
<evidence type="ECO:0000269" key="10">
    <source>
    </source>
</evidence>
<evidence type="ECO:0000303" key="11">
    <source>
    </source>
</evidence>
<evidence type="ECO:0000303" key="12">
    <source>
    </source>
</evidence>
<evidence type="ECO:0000305" key="13"/>
<evidence type="ECO:0000312" key="14">
    <source>
        <dbReference type="HGNC" id="HGNC:27709"/>
    </source>
</evidence>
<evidence type="ECO:0007744" key="15">
    <source>
    </source>
</evidence>
<sequence>MNLGDGLKLETELLDGKTKLILSPYEHKSKISVKMGNKAKIAKCPLRTKTGHILKSTQDTCIGSEKLLQKKPVGSETSQAKGEKNGMTFSSTKDLCKQCIDKDCLHIQKEISPATPNMQKTRNTVNTSLVGKQKPHKKHITAENMKSSLVCLTQDQLQQILMTVNQGNRSLSLTENGKEAKSQYSLYLNSISNQPKDENIMGLFKKTEMVSSVPAENKSVLNEHQETSKQCEQKIAIENEWKPADIFSTLGERECDRSSLEAKKAQWRKELDEQVALKKKEKEVSEKWNDPWKKSESDKIIWEKHQILDQSRETVLLEHPFSAVKQELQRKWIEELNKQIEDDRQRKIEEKIIYSKGEEHDRWAMHFDSLKSYPGSQSQLFSQSTHKQPEYFCVSPDTQELADVSSVCTPTTGSQVEPSEEEHIAKPIKDVVMANSKKTNFLRSMTALLDPAQIEERDRRRQKQLEHQKAITAQVEEKRRKKQLEEEQRKKEEQEEELRLAQEREEMQKQYEEDILKQKQKEEIMTLKTNELFQTMQRAQELAQRLKQEQRIRELAQKGHDTSRLIKNLGVDTIQMEYNASNISNSRHDSDEISGKMNTYMNSTTSKKDTGVQTDDLNIGIFTNAESHCGSLMERDITNCSSPEISAELIGQFSTKKNKQELTQDKGASLEKENNRCNDQCNQFTRIEKQTKHMKKYPKRPDWNINKPPKRYIPASEKYPKQLQKQREEKKVRRQMELLHLVEKNNPGHLSQNRGISPEIFHSSHQETESKLRWHLVKKEEEPLNIHSFSKERSPSSPVPVVKNRTQQTQNTLHLPLKNSSYERENLISGSNQTELSSGISESSHFIPYVRTNEIYYLDPDAPLSGPSTQDPQYQNSQDCGQKRQLFDSDCVRDPLLNPNMVKNRDRQQAILKGLSELRQGLLQKQKELESSLLPLAENQEESFGSSF</sequence>